<accession>O93428</accession>
<reference evidence="7 8" key="1">
    <citation type="journal article" date="1999" name="Biochim. Biophys. Acta">
        <title>Cathepsin D from the liver of the Antarctic icefish Chionodraco hamatus exhibits unusual activity and stability at high temperatures.</title>
        <authorList>
            <person name="Capasso C."/>
            <person name="Lees W.E."/>
            <person name="Capasso A."/>
            <person name="Scudiero R."/>
            <person name="Carginale V."/>
            <person name="Kille P."/>
            <person name="Kay J."/>
            <person name="Parisi E."/>
        </authorList>
    </citation>
    <scope>NUCLEOTIDE SEQUENCE [MRNA]</scope>
    <scope>PROTEIN SEQUENCE OF 62-90</scope>
    <scope>ACTIVITY REGULATION</scope>
    <scope>BIOPHYSICOCHEMICAL PROPERTIES</scope>
    <source>
        <tissue evidence="8">Liver</tissue>
    </source>
</reference>
<gene>
    <name type="primary">ctsd</name>
</gene>
<name>CATD_CHIHA</name>
<evidence type="ECO:0000250" key="1">
    <source>
        <dbReference type="UniProtKB" id="P07339"/>
    </source>
</evidence>
<evidence type="ECO:0000250" key="2">
    <source>
        <dbReference type="UniProtKB" id="Q9DEX3"/>
    </source>
</evidence>
<evidence type="ECO:0000255" key="3"/>
<evidence type="ECO:0000255" key="4">
    <source>
        <dbReference type="PROSITE-ProRule" id="PRU01103"/>
    </source>
</evidence>
<evidence type="ECO:0000255" key="5">
    <source>
        <dbReference type="PROSITE-ProRule" id="PRU10094"/>
    </source>
</evidence>
<evidence type="ECO:0000269" key="6">
    <source>
    </source>
</evidence>
<evidence type="ECO:0000305" key="7"/>
<evidence type="ECO:0000312" key="8">
    <source>
        <dbReference type="EMBL" id="CAA07719.1"/>
    </source>
</evidence>
<organism>
    <name type="scientific">Chionodraco hamatus</name>
    <name type="common">Antarctic teleost icefish</name>
    <name type="synonym">Chaenichthys rhinoceratus hamatus</name>
    <dbReference type="NCBI Taxonomy" id="36188"/>
    <lineage>
        <taxon>Eukaryota</taxon>
        <taxon>Metazoa</taxon>
        <taxon>Chordata</taxon>
        <taxon>Craniata</taxon>
        <taxon>Vertebrata</taxon>
        <taxon>Euteleostomi</taxon>
        <taxon>Actinopterygii</taxon>
        <taxon>Neopterygii</taxon>
        <taxon>Teleostei</taxon>
        <taxon>Neoteleostei</taxon>
        <taxon>Acanthomorphata</taxon>
        <taxon>Eupercaria</taxon>
        <taxon>Perciformes</taxon>
        <taxon>Notothenioidei</taxon>
        <taxon>Channichthyidae</taxon>
        <taxon>Chionodraco</taxon>
    </lineage>
</organism>
<feature type="signal peptide" evidence="3">
    <location>
        <begin position="1"/>
        <end position="18"/>
    </location>
</feature>
<feature type="propeptide" id="PRO_0000285984" description="Activation peptide" evidence="3 6">
    <location>
        <begin position="19"/>
        <end position="61"/>
    </location>
</feature>
<feature type="chain" id="PRO_5000064481" description="Cathepsin D" evidence="6">
    <location>
        <begin position="62"/>
        <end position="396"/>
    </location>
</feature>
<feature type="domain" description="Peptidase A1" evidence="4">
    <location>
        <begin position="76"/>
        <end position="393"/>
    </location>
</feature>
<feature type="active site" evidence="1 5">
    <location>
        <position position="94"/>
    </location>
</feature>
<feature type="active site" evidence="1 5">
    <location>
        <position position="281"/>
    </location>
</feature>
<feature type="glycosylation site" description="N-linked (GlcNAc...) asparagine" evidence="3">
    <location>
        <position position="131"/>
    </location>
</feature>
<feature type="glycosylation site" description="N-linked (GlcNAc...) asparagine" evidence="3">
    <location>
        <position position="249"/>
    </location>
</feature>
<feature type="disulfide bond" evidence="1">
    <location>
        <begin position="107"/>
        <end position="114"/>
    </location>
</feature>
<feature type="disulfide bond" evidence="1">
    <location>
        <begin position="272"/>
        <end position="276"/>
    </location>
</feature>
<feature type="disulfide bond" evidence="1">
    <location>
        <begin position="315"/>
        <end position="352"/>
    </location>
</feature>
<dbReference type="EC" id="3.4.23.5"/>
<dbReference type="EMBL" id="AJ007878">
    <property type="protein sequence ID" value="CAA07719.1"/>
    <property type="status" value="ALT_FRAME"/>
    <property type="molecule type" value="mRNA"/>
</dbReference>
<dbReference type="SMR" id="O93428"/>
<dbReference type="MEROPS" id="A01.009"/>
<dbReference type="GlyCosmos" id="O93428">
    <property type="glycosylation" value="2 sites, No reported glycans"/>
</dbReference>
<dbReference type="GO" id="GO:0005764">
    <property type="term" value="C:lysosome"/>
    <property type="evidence" value="ECO:0007669"/>
    <property type="project" value="UniProtKB-SubCell"/>
</dbReference>
<dbReference type="GO" id="GO:0004190">
    <property type="term" value="F:aspartic-type endopeptidase activity"/>
    <property type="evidence" value="ECO:0000314"/>
    <property type="project" value="UniProtKB"/>
</dbReference>
<dbReference type="GO" id="GO:0006508">
    <property type="term" value="P:proteolysis"/>
    <property type="evidence" value="ECO:0000314"/>
    <property type="project" value="UniProtKB"/>
</dbReference>
<dbReference type="CDD" id="cd05490">
    <property type="entry name" value="Cathepsin_D2"/>
    <property type="match status" value="1"/>
</dbReference>
<dbReference type="FunFam" id="2.40.70.10:FF:000009">
    <property type="entry name" value="Aspartic proteinase A1"/>
    <property type="match status" value="1"/>
</dbReference>
<dbReference type="FunFam" id="2.40.70.10:FF:000066">
    <property type="entry name" value="Napsin A aspartic peptidase"/>
    <property type="match status" value="1"/>
</dbReference>
<dbReference type="Gene3D" id="2.40.70.10">
    <property type="entry name" value="Acid Proteases"/>
    <property type="match status" value="2"/>
</dbReference>
<dbReference type="InterPro" id="IPR001461">
    <property type="entry name" value="Aspartic_peptidase_A1"/>
</dbReference>
<dbReference type="InterPro" id="IPR001969">
    <property type="entry name" value="Aspartic_peptidase_AS"/>
</dbReference>
<dbReference type="InterPro" id="IPR012848">
    <property type="entry name" value="Aspartic_peptidase_N"/>
</dbReference>
<dbReference type="InterPro" id="IPR033144">
    <property type="entry name" value="Cathepsin_D"/>
</dbReference>
<dbReference type="InterPro" id="IPR033121">
    <property type="entry name" value="PEPTIDASE_A1"/>
</dbReference>
<dbReference type="InterPro" id="IPR021109">
    <property type="entry name" value="Peptidase_aspartic_dom_sf"/>
</dbReference>
<dbReference type="PANTHER" id="PTHR47966">
    <property type="entry name" value="BETA-SITE APP-CLEAVING ENZYME, ISOFORM A-RELATED"/>
    <property type="match status" value="1"/>
</dbReference>
<dbReference type="PANTHER" id="PTHR47966:SF42">
    <property type="entry name" value="CATHEPSIN D"/>
    <property type="match status" value="1"/>
</dbReference>
<dbReference type="Pfam" id="PF07966">
    <property type="entry name" value="A1_Propeptide"/>
    <property type="match status" value="1"/>
</dbReference>
<dbReference type="Pfam" id="PF00026">
    <property type="entry name" value="Asp"/>
    <property type="match status" value="1"/>
</dbReference>
<dbReference type="PRINTS" id="PR00792">
    <property type="entry name" value="PEPSIN"/>
</dbReference>
<dbReference type="SUPFAM" id="SSF50630">
    <property type="entry name" value="Acid proteases"/>
    <property type="match status" value="1"/>
</dbReference>
<dbReference type="PROSITE" id="PS00141">
    <property type="entry name" value="ASP_PROTEASE"/>
    <property type="match status" value="2"/>
</dbReference>
<dbReference type="PROSITE" id="PS51767">
    <property type="entry name" value="PEPTIDASE_A1"/>
    <property type="match status" value="1"/>
</dbReference>
<sequence>MKMLLLCVFSALALTNDALVRIPLKKFRSIRRQLTDSGKRAEELLADHHSLKYNLSFPASNAPTPETLKNYLDAQYYGEIGLGTPPQPFTVVFDTGSSNLWVPSIHCSLLDIACLLHHKYNSGKSSTYVKNGTAFAIQYGSGSLSGYLSQDTCTIGDLAIDSQLFGEAIKQPGVAFIAAKFDGILGMAYPRISVDGVAPVFDNIMSQKKVEQNVFSFYLNRNPDTEPGGELLLGGTDPKYYTGDFNYVNVTRQAYWQIRVDSMAVGDQLSLCTGGCEAIVDSGTSLITGPSVEVKALQKAIGAFPLIQGEYMVNCDTVPSLPVISFTVGGQVYTLTGEQYILKVTQAGKTMCLSGFMGLDIPAPAGPLWILGDVFMGQYYTVFDRDANRVGFAKAK</sequence>
<protein>
    <recommendedName>
        <fullName>Cathepsin D</fullName>
        <ecNumber>3.4.23.5</ecNumber>
    </recommendedName>
</protein>
<proteinExistence type="evidence at protein level"/>
<comment type="function">
    <text evidence="7">Acid protease active in intracellular protein breakdown.</text>
</comment>
<comment type="catalytic activity">
    <reaction evidence="7">
        <text>Specificity similar to, but narrower than, that of pepsin A. Does not cleave the 4-Gln-|-His-5 bond in B chain of insulin.</text>
        <dbReference type="EC" id="3.4.23.5"/>
    </reaction>
</comment>
<comment type="activity regulation">
    <text evidence="6">Inhibited by pepstatin.</text>
</comment>
<comment type="biophysicochemical properties">
    <phDependence>
        <text evidence="6">Optimum pH is 3.0.</text>
    </phDependence>
    <temperatureDependence>
        <text evidence="6">Highly thermostable. Enzyme activity is maintained up to 45 degrees Celsius. Active at 50 degrees Celsius but with reduced catalytic activity.</text>
    </temperatureDependence>
</comment>
<comment type="subunit">
    <text evidence="2">Monomer.</text>
</comment>
<comment type="subcellular location">
    <subcellularLocation>
        <location evidence="2">Lysosome</location>
    </subcellularLocation>
</comment>
<comment type="similarity">
    <text evidence="3">Belongs to the peptidase A1 family.</text>
</comment>
<comment type="sequence caution" evidence="7">
    <conflict type="frameshift">
        <sequence resource="EMBL-CDS" id="CAA07719"/>
    </conflict>
</comment>
<keyword id="KW-0064">Aspartyl protease</keyword>
<keyword id="KW-0903">Direct protein sequencing</keyword>
<keyword id="KW-1015">Disulfide bond</keyword>
<keyword id="KW-0325">Glycoprotein</keyword>
<keyword id="KW-0378">Hydrolase</keyword>
<keyword id="KW-0458">Lysosome</keyword>
<keyword id="KW-0645">Protease</keyword>
<keyword id="KW-0732">Signal</keyword>
<keyword id="KW-0865">Zymogen</keyword>